<protein>
    <recommendedName>
        <fullName>Double-stranded RNA-binding protein 5</fullName>
    </recommendedName>
    <alternativeName>
        <fullName>dsRNA-binding protein 5</fullName>
        <shortName>AtDRB5</shortName>
    </alternativeName>
</protein>
<gene>
    <name type="primary">DRB5</name>
    <name type="ordered locus">At5g41070</name>
    <name type="ORF">MEE6.14</name>
</gene>
<name>DRB5_ARATH</name>
<dbReference type="EMBL" id="AB010072">
    <property type="protein sequence ID" value="BAB09709.1"/>
    <property type="status" value="ALT_SEQ"/>
    <property type="molecule type" value="Genomic_DNA"/>
</dbReference>
<dbReference type="EMBL" id="CP002688">
    <property type="protein sequence ID" value="AED94633.1"/>
    <property type="molecule type" value="Genomic_DNA"/>
</dbReference>
<dbReference type="EMBL" id="AK117808">
    <property type="protein sequence ID" value="BAC42450.1"/>
    <property type="molecule type" value="mRNA"/>
</dbReference>
<dbReference type="EMBL" id="BT009653">
    <property type="protein sequence ID" value="AAP75803.1"/>
    <property type="molecule type" value="mRNA"/>
</dbReference>
<dbReference type="RefSeq" id="NP_198923.2">
    <property type="nucleotide sequence ID" value="NM_123472.3"/>
</dbReference>
<dbReference type="SMR" id="Q8GY79"/>
<dbReference type="BioGRID" id="19360">
    <property type="interactions" value="10"/>
</dbReference>
<dbReference type="FunCoup" id="Q8GY79">
    <property type="interactions" value="5"/>
</dbReference>
<dbReference type="IntAct" id="Q8GY79">
    <property type="interactions" value="9"/>
</dbReference>
<dbReference type="STRING" id="3702.Q8GY79"/>
<dbReference type="PaxDb" id="3702-AT5G41070.1"/>
<dbReference type="ProteomicsDB" id="242285"/>
<dbReference type="EnsemblPlants" id="AT5G41070.1">
    <property type="protein sequence ID" value="AT5G41070.1"/>
    <property type="gene ID" value="AT5G41070"/>
</dbReference>
<dbReference type="GeneID" id="834109"/>
<dbReference type="Gramene" id="AT5G41070.1">
    <property type="protein sequence ID" value="AT5G41070.1"/>
    <property type="gene ID" value="AT5G41070"/>
</dbReference>
<dbReference type="KEGG" id="ath:AT5G41070"/>
<dbReference type="Araport" id="AT5G41070"/>
<dbReference type="TAIR" id="AT5G41070">
    <property type="gene designation" value="DRB5"/>
</dbReference>
<dbReference type="eggNOG" id="ENOG502QTBA">
    <property type="taxonomic scope" value="Eukaryota"/>
</dbReference>
<dbReference type="HOGENOM" id="CLU_038996_0_0_1"/>
<dbReference type="InParanoid" id="Q8GY79"/>
<dbReference type="OMA" id="GSCHFPG"/>
<dbReference type="OrthoDB" id="5988181at2759"/>
<dbReference type="PhylomeDB" id="Q8GY79"/>
<dbReference type="PRO" id="PR:Q8GY79"/>
<dbReference type="Proteomes" id="UP000006548">
    <property type="component" value="Chromosome 5"/>
</dbReference>
<dbReference type="ExpressionAtlas" id="Q8GY79">
    <property type="expression patterns" value="baseline and differential"/>
</dbReference>
<dbReference type="GO" id="GO:0003725">
    <property type="term" value="F:double-stranded RNA binding"/>
    <property type="evidence" value="ECO:0000314"/>
    <property type="project" value="TAIR"/>
</dbReference>
<dbReference type="CDD" id="cd19907">
    <property type="entry name" value="DSRM_AtDRB-like_rpt1"/>
    <property type="match status" value="1"/>
</dbReference>
<dbReference type="CDD" id="cd19908">
    <property type="entry name" value="DSRM_AtDRB-like_rpt2"/>
    <property type="match status" value="1"/>
</dbReference>
<dbReference type="FunFam" id="3.30.160.20:FF:000036">
    <property type="entry name" value="Double-stranded RNA-binding protein 2"/>
    <property type="match status" value="2"/>
</dbReference>
<dbReference type="Gene3D" id="3.30.160.20">
    <property type="match status" value="2"/>
</dbReference>
<dbReference type="InterPro" id="IPR044450">
    <property type="entry name" value="AtDRB-like_DSRM_1"/>
</dbReference>
<dbReference type="InterPro" id="IPR044451">
    <property type="entry name" value="AtDRB-like_DSRM_2"/>
</dbReference>
<dbReference type="InterPro" id="IPR014720">
    <property type="entry name" value="dsRBD_dom"/>
</dbReference>
<dbReference type="PANTHER" id="PTHR46031">
    <property type="match status" value="1"/>
</dbReference>
<dbReference type="PANTHER" id="PTHR46031:SF10">
    <property type="entry name" value="DOUBLE-STRANDED RNA-BINDING PROTEIN 5"/>
    <property type="match status" value="1"/>
</dbReference>
<dbReference type="Pfam" id="PF00035">
    <property type="entry name" value="dsrm"/>
    <property type="match status" value="2"/>
</dbReference>
<dbReference type="SMART" id="SM00358">
    <property type="entry name" value="DSRM"/>
    <property type="match status" value="2"/>
</dbReference>
<dbReference type="SUPFAM" id="SSF54768">
    <property type="entry name" value="dsRNA-binding domain-like"/>
    <property type="match status" value="2"/>
</dbReference>
<dbReference type="PROSITE" id="PS50137">
    <property type="entry name" value="DS_RBD"/>
    <property type="match status" value="2"/>
</dbReference>
<accession>Q8GY79</accession>
<accession>Q9FLM2</accession>
<organism>
    <name type="scientific">Arabidopsis thaliana</name>
    <name type="common">Mouse-ear cress</name>
    <dbReference type="NCBI Taxonomy" id="3702"/>
    <lineage>
        <taxon>Eukaryota</taxon>
        <taxon>Viridiplantae</taxon>
        <taxon>Streptophyta</taxon>
        <taxon>Embryophyta</taxon>
        <taxon>Tracheophyta</taxon>
        <taxon>Spermatophyta</taxon>
        <taxon>Magnoliopsida</taxon>
        <taxon>eudicotyledons</taxon>
        <taxon>Gunneridae</taxon>
        <taxon>Pentapetalae</taxon>
        <taxon>rosids</taxon>
        <taxon>malvids</taxon>
        <taxon>Brassicales</taxon>
        <taxon>Brassicaceae</taxon>
        <taxon>Camelineae</taxon>
        <taxon>Arabidopsis</taxon>
    </lineage>
</organism>
<comment type="function">
    <text evidence="3">Binds double-stranded RNA. May be involved in RNA-mediated silencing.</text>
</comment>
<comment type="subunit">
    <text evidence="3">Heterodimer with DRB1, DRB2 or DRB4. Interacts with DCL1 and DCL3.</text>
</comment>
<comment type="interaction">
    <interactant intactId="EBI-632672">
        <id>Q8GY79</id>
    </interactant>
    <interactant intactId="EBI-4426649">
        <id>Q17TI5</id>
        <label>BRX</label>
    </interactant>
    <organismsDiffer>false</organismsDiffer>
    <experiments>3</experiments>
</comment>
<comment type="interaction">
    <interactant intactId="EBI-632672">
        <id>Q8GY79</id>
    </interactant>
    <interactant intactId="EBI-632620">
        <id>O04492</id>
        <label>DRB1</label>
    </interactant>
    <organismsDiffer>false</organismsDiffer>
    <experiments>7</experiments>
</comment>
<comment type="tissue specificity">
    <text evidence="4">Expressed in the shoot apical meristem (SAM).</text>
</comment>
<comment type="disruption phenotype">
    <text evidence="4">No visible phenotype.</text>
</comment>
<comment type="sequence caution" evidence="5">
    <conflict type="erroneous gene model prediction">
        <sequence resource="EMBL-CDS" id="BAB09709"/>
    </conflict>
</comment>
<reference key="1">
    <citation type="journal article" date="1998" name="DNA Res.">
        <title>Structural analysis of Arabidopsis thaliana chromosome 5. IV. Sequence features of the regions of 1,456,315 bp covered by nineteen physically assigned P1 and TAC clones.</title>
        <authorList>
            <person name="Sato S."/>
            <person name="Kaneko T."/>
            <person name="Kotani H."/>
            <person name="Nakamura Y."/>
            <person name="Asamizu E."/>
            <person name="Miyajima N."/>
            <person name="Tabata S."/>
        </authorList>
    </citation>
    <scope>NUCLEOTIDE SEQUENCE [LARGE SCALE GENOMIC DNA]</scope>
    <source>
        <strain>cv. Columbia</strain>
    </source>
</reference>
<reference key="2">
    <citation type="journal article" date="2017" name="Plant J.">
        <title>Araport11: a complete reannotation of the Arabidopsis thaliana reference genome.</title>
        <authorList>
            <person name="Cheng C.Y."/>
            <person name="Krishnakumar V."/>
            <person name="Chan A.P."/>
            <person name="Thibaud-Nissen F."/>
            <person name="Schobel S."/>
            <person name="Town C.D."/>
        </authorList>
    </citation>
    <scope>GENOME REANNOTATION</scope>
    <source>
        <strain>cv. Columbia</strain>
    </source>
</reference>
<reference key="3">
    <citation type="journal article" date="2002" name="Science">
        <title>Functional annotation of a full-length Arabidopsis cDNA collection.</title>
        <authorList>
            <person name="Seki M."/>
            <person name="Narusaka M."/>
            <person name="Kamiya A."/>
            <person name="Ishida J."/>
            <person name="Satou M."/>
            <person name="Sakurai T."/>
            <person name="Nakajima M."/>
            <person name="Enju A."/>
            <person name="Akiyama K."/>
            <person name="Oono Y."/>
            <person name="Muramatsu M."/>
            <person name="Hayashizaki Y."/>
            <person name="Kawai J."/>
            <person name="Carninci P."/>
            <person name="Itoh M."/>
            <person name="Ishii Y."/>
            <person name="Arakawa T."/>
            <person name="Shibata K."/>
            <person name="Shinagawa A."/>
            <person name="Shinozaki K."/>
        </authorList>
    </citation>
    <scope>NUCLEOTIDE SEQUENCE [LARGE SCALE MRNA]</scope>
    <source>
        <strain>cv. Columbia</strain>
    </source>
</reference>
<reference key="4">
    <citation type="journal article" date="2003" name="Science">
        <title>Empirical analysis of transcriptional activity in the Arabidopsis genome.</title>
        <authorList>
            <person name="Yamada K."/>
            <person name="Lim J."/>
            <person name="Dale J.M."/>
            <person name="Chen H."/>
            <person name="Shinn P."/>
            <person name="Palm C.J."/>
            <person name="Southwick A.M."/>
            <person name="Wu H.C."/>
            <person name="Kim C.J."/>
            <person name="Nguyen M."/>
            <person name="Pham P.K."/>
            <person name="Cheuk R.F."/>
            <person name="Karlin-Newmann G."/>
            <person name="Liu S.X."/>
            <person name="Lam B."/>
            <person name="Sakano H."/>
            <person name="Wu T."/>
            <person name="Yu G."/>
            <person name="Miranda M."/>
            <person name="Quach H.L."/>
            <person name="Tripp M."/>
            <person name="Chang C.H."/>
            <person name="Lee J.M."/>
            <person name="Toriumi M.J."/>
            <person name="Chan M.M."/>
            <person name="Tang C.C."/>
            <person name="Onodera C.S."/>
            <person name="Deng J.M."/>
            <person name="Akiyama K."/>
            <person name="Ansari Y."/>
            <person name="Arakawa T."/>
            <person name="Banh J."/>
            <person name="Banno F."/>
            <person name="Bowser L."/>
            <person name="Brooks S.Y."/>
            <person name="Carninci P."/>
            <person name="Chao Q."/>
            <person name="Choy N."/>
            <person name="Enju A."/>
            <person name="Goldsmith A.D."/>
            <person name="Gurjal M."/>
            <person name="Hansen N.F."/>
            <person name="Hayashizaki Y."/>
            <person name="Johnson-Hopson C."/>
            <person name="Hsuan V.W."/>
            <person name="Iida K."/>
            <person name="Karnes M."/>
            <person name="Khan S."/>
            <person name="Koesema E."/>
            <person name="Ishida J."/>
            <person name="Jiang P.X."/>
            <person name="Jones T."/>
            <person name="Kawai J."/>
            <person name="Kamiya A."/>
            <person name="Meyers C."/>
            <person name="Nakajima M."/>
            <person name="Narusaka M."/>
            <person name="Seki M."/>
            <person name="Sakurai T."/>
            <person name="Satou M."/>
            <person name="Tamse R."/>
            <person name="Vaysberg M."/>
            <person name="Wallender E.K."/>
            <person name="Wong C."/>
            <person name="Yamamura Y."/>
            <person name="Yuan S."/>
            <person name="Shinozaki K."/>
            <person name="Davis R.W."/>
            <person name="Theologis A."/>
            <person name="Ecker J.R."/>
        </authorList>
    </citation>
    <scope>NUCLEOTIDE SEQUENCE [LARGE SCALE MRNA]</scope>
    <source>
        <strain>cv. Columbia</strain>
    </source>
</reference>
<reference key="5">
    <citation type="journal article" date="2005" name="Plant Mol. Biol.">
        <title>Specific interactions between Dicer-like proteins and HYL1/DRB-family dsRNA-binding proteins in Arabidopsis thaliana.</title>
        <authorList>
            <person name="Hiraguri A."/>
            <person name="Itoh R."/>
            <person name="Kondo N."/>
            <person name="Nomura Y."/>
            <person name="Aizawa D."/>
            <person name="Murai Y."/>
            <person name="Koiwa H."/>
            <person name="Seki M."/>
            <person name="Shinozaki K."/>
            <person name="Fukuhara T."/>
        </authorList>
    </citation>
    <scope>FUNCTION</scope>
    <scope>SUBUNIT</scope>
    <scope>INTERACTION WITH DCL1; DCL3; DRB1; DRB4 AND DRB5</scope>
</reference>
<reference key="6">
    <citation type="journal article" date="2008" name="FEBS Lett.">
        <title>The roles of plant dsRNA-binding proteins in RNAi-like pathways.</title>
        <authorList>
            <person name="Curtin S.J."/>
            <person name="Watson J.M."/>
            <person name="Smith N.A."/>
            <person name="Eamens A.L."/>
            <person name="Blanchard C.L."/>
            <person name="Waterhouse P.M."/>
        </authorList>
    </citation>
    <scope>TISSUE SPECIFICITY</scope>
    <scope>DISRUPTION PHENOTYPE</scope>
</reference>
<sequence length="393" mass="43635">MYKNQLQELAQRSCFNLPSYTCIREGPDHAPRFKASVNFNGEIFESPTYCSTLRQAEHAAAEVSLNVLSSRVPSKSLTAKILDETGIYKNLLQETAHRAGLDLPMYTSVRSGSCHFPGFSCTVELAGMTFTGESAKTKKQAEKNAAIAAWSSLKKMSSLDSQDEEKEQEAVARVLSRFKPKEVRRRETTNQWRRRTSQQDSNKDLLIERLRWINLLTNQASSSSSTSTPNQHKNSSFISLIPPPPPPKSSKILPFIQQYKDRSSQEAKTETATEMINSKAKVNETSTRLSKQMPFSDMNRYNFVGGCSVNPYSLAPAVQMRSVIPVFAAPPPKPNPNLNPSSLSSSVNEFTSSNNSCSVLNTPGLGGQEKKNLTREMIKLGSESRILDQTHDS</sequence>
<keyword id="KW-1185">Reference proteome</keyword>
<keyword id="KW-0677">Repeat</keyword>
<keyword id="KW-0694">RNA-binding</keyword>
<proteinExistence type="evidence at protein level"/>
<evidence type="ECO:0000255" key="1">
    <source>
        <dbReference type="PROSITE-ProRule" id="PRU00266"/>
    </source>
</evidence>
<evidence type="ECO:0000256" key="2">
    <source>
        <dbReference type="SAM" id="MobiDB-lite"/>
    </source>
</evidence>
<evidence type="ECO:0000269" key="3">
    <source>
    </source>
</evidence>
<evidence type="ECO:0000269" key="4">
    <source>
    </source>
</evidence>
<evidence type="ECO:0000305" key="5"/>
<feature type="chain" id="PRO_0000404656" description="Double-stranded RNA-binding protein 5">
    <location>
        <begin position="1"/>
        <end position="393"/>
    </location>
</feature>
<feature type="domain" description="DRBM 1" evidence="1">
    <location>
        <begin position="1"/>
        <end position="70"/>
    </location>
</feature>
<feature type="domain" description="DRBM 2" evidence="1">
    <location>
        <begin position="87"/>
        <end position="155"/>
    </location>
</feature>
<feature type="region of interest" description="Disordered" evidence="2">
    <location>
        <begin position="220"/>
        <end position="251"/>
    </location>
</feature>
<feature type="region of interest" description="Disordered" evidence="2">
    <location>
        <begin position="335"/>
        <end position="371"/>
    </location>
</feature>
<feature type="compositionally biased region" description="Polar residues" evidence="2">
    <location>
        <begin position="347"/>
        <end position="361"/>
    </location>
</feature>